<gene>
    <name evidence="1" type="primary">panC</name>
    <name type="ordered locus">CFF8240_1370</name>
</gene>
<sequence length="273" mass="30337">MQILKSVSELLEFRNNCGGSVGFVPTMGALHNGHATLIKNSVSQNDDTIVSVFVNPTQFLPGEDLEKYPRNQSGDIKICELCGASALFFPNADEIYSKDEPLIIAPKRISTILEGATRPGHFDGVCMVLNKLFNLVSPTRAYFGKKDSQQLVIVQNMVKRFFLNLEIVPCDIVRESDGLALSSRNSYLNDDELCYALKLSRSLMRASNLIKANELNSNIIKSSMSECLEPLKVDYIAVVDRNFEPIENVEIGNSIILVAAYVGKTRLIDNIWI</sequence>
<feature type="chain" id="PRO_0000305420" description="Pantothenate synthetase">
    <location>
        <begin position="1"/>
        <end position="273"/>
    </location>
</feature>
<feature type="active site" description="Proton donor" evidence="1">
    <location>
        <position position="34"/>
    </location>
</feature>
<feature type="binding site" evidence="1">
    <location>
        <begin position="27"/>
        <end position="34"/>
    </location>
    <ligand>
        <name>ATP</name>
        <dbReference type="ChEBI" id="CHEBI:30616"/>
    </ligand>
</feature>
<feature type="binding site" evidence="1">
    <location>
        <position position="58"/>
    </location>
    <ligand>
        <name>(R)-pantoate</name>
        <dbReference type="ChEBI" id="CHEBI:15980"/>
    </ligand>
</feature>
<feature type="binding site" evidence="1">
    <location>
        <position position="58"/>
    </location>
    <ligand>
        <name>beta-alanine</name>
        <dbReference type="ChEBI" id="CHEBI:57966"/>
    </ligand>
</feature>
<feature type="binding site" evidence="1">
    <location>
        <begin position="144"/>
        <end position="147"/>
    </location>
    <ligand>
        <name>ATP</name>
        <dbReference type="ChEBI" id="CHEBI:30616"/>
    </ligand>
</feature>
<feature type="binding site" evidence="1">
    <location>
        <position position="150"/>
    </location>
    <ligand>
        <name>(R)-pantoate</name>
        <dbReference type="ChEBI" id="CHEBI:15980"/>
    </ligand>
</feature>
<feature type="binding site" evidence="1">
    <location>
        <position position="173"/>
    </location>
    <ligand>
        <name>ATP</name>
        <dbReference type="ChEBI" id="CHEBI:30616"/>
    </ligand>
</feature>
<feature type="binding site" evidence="1">
    <location>
        <begin position="181"/>
        <end position="184"/>
    </location>
    <ligand>
        <name>ATP</name>
        <dbReference type="ChEBI" id="CHEBI:30616"/>
    </ligand>
</feature>
<evidence type="ECO:0000255" key="1">
    <source>
        <dbReference type="HAMAP-Rule" id="MF_00158"/>
    </source>
</evidence>
<keyword id="KW-0067">ATP-binding</keyword>
<keyword id="KW-0963">Cytoplasm</keyword>
<keyword id="KW-0436">Ligase</keyword>
<keyword id="KW-0547">Nucleotide-binding</keyword>
<keyword id="KW-0566">Pantothenate biosynthesis</keyword>
<organism>
    <name type="scientific">Campylobacter fetus subsp. fetus (strain 82-40)</name>
    <dbReference type="NCBI Taxonomy" id="360106"/>
    <lineage>
        <taxon>Bacteria</taxon>
        <taxon>Pseudomonadati</taxon>
        <taxon>Campylobacterota</taxon>
        <taxon>Epsilonproteobacteria</taxon>
        <taxon>Campylobacterales</taxon>
        <taxon>Campylobacteraceae</taxon>
        <taxon>Campylobacter</taxon>
    </lineage>
</organism>
<reference key="1">
    <citation type="submission" date="2006-11" db="EMBL/GenBank/DDBJ databases">
        <title>Sequence of Campylobacter fetus subsp. fetus 82-40.</title>
        <authorList>
            <person name="Fouts D.E."/>
            <person name="Nelson K.E."/>
        </authorList>
    </citation>
    <scope>NUCLEOTIDE SEQUENCE [LARGE SCALE GENOMIC DNA]</scope>
    <source>
        <strain>82-40</strain>
    </source>
</reference>
<comment type="function">
    <text evidence="1">Catalyzes the condensation of pantoate with beta-alanine in an ATP-dependent reaction via a pantoyl-adenylate intermediate.</text>
</comment>
<comment type="catalytic activity">
    <reaction evidence="1">
        <text>(R)-pantoate + beta-alanine + ATP = (R)-pantothenate + AMP + diphosphate + H(+)</text>
        <dbReference type="Rhea" id="RHEA:10912"/>
        <dbReference type="ChEBI" id="CHEBI:15378"/>
        <dbReference type="ChEBI" id="CHEBI:15980"/>
        <dbReference type="ChEBI" id="CHEBI:29032"/>
        <dbReference type="ChEBI" id="CHEBI:30616"/>
        <dbReference type="ChEBI" id="CHEBI:33019"/>
        <dbReference type="ChEBI" id="CHEBI:57966"/>
        <dbReference type="ChEBI" id="CHEBI:456215"/>
        <dbReference type="EC" id="6.3.2.1"/>
    </reaction>
</comment>
<comment type="pathway">
    <text evidence="1">Cofactor biosynthesis; (R)-pantothenate biosynthesis; (R)-pantothenate from (R)-pantoate and beta-alanine: step 1/1.</text>
</comment>
<comment type="subunit">
    <text evidence="1">Homodimer.</text>
</comment>
<comment type="subcellular location">
    <subcellularLocation>
        <location evidence="1">Cytoplasm</location>
    </subcellularLocation>
</comment>
<comment type="miscellaneous">
    <text evidence="1">The reaction proceeds by a bi uni uni bi ping pong mechanism.</text>
</comment>
<comment type="similarity">
    <text evidence="1">Belongs to the pantothenate synthetase family.</text>
</comment>
<proteinExistence type="inferred from homology"/>
<accession>A0RQM8</accession>
<name>PANC_CAMFF</name>
<dbReference type="EC" id="6.3.2.1" evidence="1"/>
<dbReference type="EMBL" id="CP000487">
    <property type="protein sequence ID" value="ABK81959.1"/>
    <property type="molecule type" value="Genomic_DNA"/>
</dbReference>
<dbReference type="RefSeq" id="WP_002850200.1">
    <property type="nucleotide sequence ID" value="NC_008599.1"/>
</dbReference>
<dbReference type="SMR" id="A0RQM8"/>
<dbReference type="GeneID" id="61065186"/>
<dbReference type="KEGG" id="cff:CFF8240_1370"/>
<dbReference type="eggNOG" id="COG0414">
    <property type="taxonomic scope" value="Bacteria"/>
</dbReference>
<dbReference type="HOGENOM" id="CLU_047148_0_0_7"/>
<dbReference type="UniPathway" id="UPA00028">
    <property type="reaction ID" value="UER00005"/>
</dbReference>
<dbReference type="Proteomes" id="UP000000760">
    <property type="component" value="Chromosome"/>
</dbReference>
<dbReference type="GO" id="GO:0005829">
    <property type="term" value="C:cytosol"/>
    <property type="evidence" value="ECO:0007669"/>
    <property type="project" value="TreeGrafter"/>
</dbReference>
<dbReference type="GO" id="GO:0005524">
    <property type="term" value="F:ATP binding"/>
    <property type="evidence" value="ECO:0007669"/>
    <property type="project" value="UniProtKB-KW"/>
</dbReference>
<dbReference type="GO" id="GO:0004592">
    <property type="term" value="F:pantoate-beta-alanine ligase activity"/>
    <property type="evidence" value="ECO:0007669"/>
    <property type="project" value="UniProtKB-UniRule"/>
</dbReference>
<dbReference type="GO" id="GO:0015940">
    <property type="term" value="P:pantothenate biosynthetic process"/>
    <property type="evidence" value="ECO:0007669"/>
    <property type="project" value="UniProtKB-UniRule"/>
</dbReference>
<dbReference type="CDD" id="cd00560">
    <property type="entry name" value="PanC"/>
    <property type="match status" value="1"/>
</dbReference>
<dbReference type="Gene3D" id="3.40.50.620">
    <property type="entry name" value="HUPs"/>
    <property type="match status" value="1"/>
</dbReference>
<dbReference type="Gene3D" id="3.30.1300.10">
    <property type="entry name" value="Pantoate-beta-alanine ligase, C-terminal domain"/>
    <property type="match status" value="1"/>
</dbReference>
<dbReference type="HAMAP" id="MF_00158">
    <property type="entry name" value="PanC"/>
    <property type="match status" value="1"/>
</dbReference>
<dbReference type="InterPro" id="IPR004821">
    <property type="entry name" value="Cyt_trans-like"/>
</dbReference>
<dbReference type="InterPro" id="IPR003721">
    <property type="entry name" value="Pantoate_ligase"/>
</dbReference>
<dbReference type="InterPro" id="IPR042176">
    <property type="entry name" value="Pantoate_ligase_C"/>
</dbReference>
<dbReference type="InterPro" id="IPR014729">
    <property type="entry name" value="Rossmann-like_a/b/a_fold"/>
</dbReference>
<dbReference type="NCBIfam" id="TIGR00125">
    <property type="entry name" value="cyt_tran_rel"/>
    <property type="match status" value="1"/>
</dbReference>
<dbReference type="NCBIfam" id="TIGR00018">
    <property type="entry name" value="panC"/>
    <property type="match status" value="1"/>
</dbReference>
<dbReference type="PANTHER" id="PTHR21299">
    <property type="entry name" value="CYTIDYLATE KINASE/PANTOATE-BETA-ALANINE LIGASE"/>
    <property type="match status" value="1"/>
</dbReference>
<dbReference type="PANTHER" id="PTHR21299:SF1">
    <property type="entry name" value="PANTOATE--BETA-ALANINE LIGASE"/>
    <property type="match status" value="1"/>
</dbReference>
<dbReference type="Pfam" id="PF02569">
    <property type="entry name" value="Pantoate_ligase"/>
    <property type="match status" value="1"/>
</dbReference>
<dbReference type="SUPFAM" id="SSF52374">
    <property type="entry name" value="Nucleotidylyl transferase"/>
    <property type="match status" value="1"/>
</dbReference>
<protein>
    <recommendedName>
        <fullName evidence="1">Pantothenate synthetase</fullName>
        <shortName evidence="1">PS</shortName>
        <ecNumber evidence="1">6.3.2.1</ecNumber>
    </recommendedName>
    <alternativeName>
        <fullName evidence="1">Pantoate--beta-alanine ligase</fullName>
    </alternativeName>
    <alternativeName>
        <fullName evidence="1">Pantoate-activating enzyme</fullName>
    </alternativeName>
</protein>